<evidence type="ECO:0000250" key="1"/>
<evidence type="ECO:0000256" key="2">
    <source>
        <dbReference type="SAM" id="MobiDB-lite"/>
    </source>
</evidence>
<evidence type="ECO:0000269" key="3">
    <source>
    </source>
</evidence>
<evidence type="ECO:0000269" key="4">
    <source>
    </source>
</evidence>
<evidence type="ECO:0000269" key="5">
    <source>
    </source>
</evidence>
<evidence type="ECO:0000305" key="6"/>
<evidence type="ECO:0000305" key="7">
    <source>
    </source>
</evidence>
<evidence type="ECO:0000305" key="8">
    <source>
    </source>
</evidence>
<evidence type="ECO:0007829" key="9">
    <source>
        <dbReference type="PDB" id="1VEI"/>
    </source>
</evidence>
<evidence type="ECO:0007829" key="10">
    <source>
        <dbReference type="PDB" id="2YW6"/>
    </source>
</evidence>
<dbReference type="EC" id="1.16.-.-"/>
<dbReference type="RefSeq" id="WP_003897878.1">
    <property type="nucleotide sequence ID" value="NZ_UGQO01000001.1"/>
</dbReference>
<dbReference type="PDB" id="1UVH">
    <property type="method" value="X-ray"/>
    <property type="resolution" value="2.80 A"/>
    <property type="chains" value="A/B/C/D=1-183"/>
</dbReference>
<dbReference type="PDB" id="1VEI">
    <property type="method" value="X-ray"/>
    <property type="resolution" value="2.85 A"/>
    <property type="chains" value="A=1-183"/>
</dbReference>
<dbReference type="PDB" id="1VEL">
    <property type="method" value="X-ray"/>
    <property type="resolution" value="2.99 A"/>
    <property type="chains" value="A/B/C/D/E/F=1-183"/>
</dbReference>
<dbReference type="PDB" id="1VEQ">
    <property type="method" value="X-ray"/>
    <property type="resolution" value="3.98 A"/>
    <property type="chains" value="A/B/C/D/E/F/G/H/I/J/K/L=1-183"/>
</dbReference>
<dbReference type="PDB" id="2YW6">
    <property type="method" value="X-ray"/>
    <property type="resolution" value="2.53 A"/>
    <property type="chains" value="A/B/C=1-183"/>
</dbReference>
<dbReference type="PDB" id="2YW7">
    <property type="method" value="X-ray"/>
    <property type="resolution" value="3.30 A"/>
    <property type="chains" value="A/B/C/D/E/F/G/H/I/J=1-183"/>
</dbReference>
<dbReference type="PDBsum" id="1UVH"/>
<dbReference type="PDBsum" id="1VEI"/>
<dbReference type="PDBsum" id="1VEL"/>
<dbReference type="PDBsum" id="1VEQ"/>
<dbReference type="PDBsum" id="2YW6"/>
<dbReference type="PDBsum" id="2YW7"/>
<dbReference type="SMR" id="P0C558"/>
<dbReference type="KEGG" id="msh:LI98_31975"/>
<dbReference type="KEGG" id="msn:LI99_31970"/>
<dbReference type="OMA" id="WDDYSIG"/>
<dbReference type="EvolutionaryTrace" id="P0C558"/>
<dbReference type="GO" id="GO:0005737">
    <property type="term" value="C:cytoplasm"/>
    <property type="evidence" value="ECO:0007669"/>
    <property type="project" value="UniProtKB-KW"/>
</dbReference>
<dbReference type="GO" id="GO:0009295">
    <property type="term" value="C:nucleoid"/>
    <property type="evidence" value="ECO:0007669"/>
    <property type="project" value="UniProtKB-SubCell"/>
</dbReference>
<dbReference type="GO" id="GO:0003677">
    <property type="term" value="F:DNA binding"/>
    <property type="evidence" value="ECO:0007669"/>
    <property type="project" value="UniProtKB-KW"/>
</dbReference>
<dbReference type="GO" id="GO:0008199">
    <property type="term" value="F:ferric iron binding"/>
    <property type="evidence" value="ECO:0007669"/>
    <property type="project" value="InterPro"/>
</dbReference>
<dbReference type="GO" id="GO:0016722">
    <property type="term" value="F:oxidoreductase activity, acting on metal ions"/>
    <property type="evidence" value="ECO:0007669"/>
    <property type="project" value="InterPro"/>
</dbReference>
<dbReference type="GO" id="GO:0006879">
    <property type="term" value="P:intracellular iron ion homeostasis"/>
    <property type="evidence" value="ECO:0007669"/>
    <property type="project" value="UniProtKB-KW"/>
</dbReference>
<dbReference type="CDD" id="cd01043">
    <property type="entry name" value="DPS"/>
    <property type="match status" value="1"/>
</dbReference>
<dbReference type="Gene3D" id="1.20.1260.10">
    <property type="match status" value="1"/>
</dbReference>
<dbReference type="InterPro" id="IPR002177">
    <property type="entry name" value="DPS_DNA-bd"/>
</dbReference>
<dbReference type="InterPro" id="IPR023188">
    <property type="entry name" value="DPS_DNA-bd_CS"/>
</dbReference>
<dbReference type="InterPro" id="IPR012347">
    <property type="entry name" value="Ferritin-like"/>
</dbReference>
<dbReference type="InterPro" id="IPR009078">
    <property type="entry name" value="Ferritin-like_SF"/>
</dbReference>
<dbReference type="InterPro" id="IPR008331">
    <property type="entry name" value="Ferritin_DPS_dom"/>
</dbReference>
<dbReference type="PANTHER" id="PTHR42932:SF3">
    <property type="entry name" value="DNA PROTECTION DURING STARVATION PROTEIN"/>
    <property type="match status" value="1"/>
</dbReference>
<dbReference type="PANTHER" id="PTHR42932">
    <property type="entry name" value="GENERAL STRESS PROTEIN 20U"/>
    <property type="match status" value="1"/>
</dbReference>
<dbReference type="Pfam" id="PF00210">
    <property type="entry name" value="Ferritin"/>
    <property type="match status" value="1"/>
</dbReference>
<dbReference type="PIRSF" id="PIRSF005900">
    <property type="entry name" value="Dps"/>
    <property type="match status" value="1"/>
</dbReference>
<dbReference type="PRINTS" id="PR01346">
    <property type="entry name" value="HELNAPAPROT"/>
</dbReference>
<dbReference type="SUPFAM" id="SSF47240">
    <property type="entry name" value="Ferritin-like"/>
    <property type="match status" value="1"/>
</dbReference>
<dbReference type="PROSITE" id="PS00818">
    <property type="entry name" value="DPS_1"/>
    <property type="match status" value="1"/>
</dbReference>
<reference key="1">
    <citation type="journal article" date="2003" name="J. Biol. Chem.">
        <title>Bimodal protection of DNA by Mycobacterium smegmatis DNA-binding protein from stationary phase cells.</title>
        <authorList>
            <person name="Gupta S."/>
            <person name="Chatterji D."/>
        </authorList>
    </citation>
    <scope>FUNCTION IN PROTECTION OF DNA</scope>
    <scope>SUBUNIT</scope>
</reference>
<reference key="2">
    <citation type="journal article" date="2004" name="J. Mol. Biol.">
        <title>X-ray analysis of Mycobacterium smegmatis Dps and a comparative study involving other Dps and Dps-like molecules.</title>
        <authorList>
            <person name="Roy S."/>
            <person name="Gupta S."/>
            <person name="Das S."/>
            <person name="Sekar K."/>
            <person name="Chatterji D."/>
            <person name="Vijayan M."/>
        </authorList>
    </citation>
    <scope>X-RAY CRYSTALLOGRAPHY (2.85 ANGSTROMS) IN COMPLEX WITH IRON</scope>
    <scope>SUBUNIT</scope>
</reference>
<reference key="3">
    <citation type="journal article" date="2005" name="J. Biol. Chem.">
        <title>Reassessment of protein stability, DNA binding, and protection of Mycobacterium smegmatis Dps.</title>
        <authorList>
            <person name="Ceci P."/>
            <person name="Ilari A."/>
            <person name="Falvo E."/>
            <person name="Giangiacomo L."/>
            <person name="Chiancone E."/>
        </authorList>
    </citation>
    <scope>X-RAY CRYSTALLOGRAPHY (2.8 ANGSTROMS) IN COMPLEX WITH IRON</scope>
    <scope>DNA-BINDING</scope>
    <scope>DNA PROTECTION</scope>
    <scope>SUBUNIT</scope>
    <source>
        <strain>MC2</strain>
    </source>
</reference>
<protein>
    <recommendedName>
        <fullName>DNA protection during starvation protein</fullName>
        <ecNumber>1.16.-.-</ecNumber>
    </recommendedName>
</protein>
<sequence length="183" mass="20270">MTSFTIPGLSDKKASDVADLLQKQLSTYNDLHLTLKHVHWNVVGPNFIGVHEMIDPQVELVRGYADEVAERIATLGKSPKGTPGAIIKDRTWDDYSVERDTVQAHLAALDLVYNGVIEDTRKSIEKLEDLDLVSQDLLIAHAGELEKFQWFVRAHLESAGGQLTHEGQSTEKGAADKARRKSA</sequence>
<gene>
    <name type="primary">dps</name>
</gene>
<name>DPS_MYCSM</name>
<keyword id="KW-0002">3D-structure</keyword>
<keyword id="KW-0963">Cytoplasm</keyword>
<keyword id="KW-0238">DNA-binding</keyword>
<keyword id="KW-0408">Iron</keyword>
<keyword id="KW-0409">Iron storage</keyword>
<keyword id="KW-0479">Metal-binding</keyword>
<keyword id="KW-0560">Oxidoreductase</keyword>
<comment type="function">
    <text evidence="1 3">Protects DNA from oxidative damage by sequestering intracellular Fe(2+) ion and storing it in the form of Fe(3+) oxyhydroxide mineral. One hydrogen peroxide oxidizes two Fe(2+) ions, which prevents hydroxyl radical production by the Fenton reaction (By similarity). It protects DNA from hydroxyl radical-mediated cleavage. Binds DNA with no apparent sequence specificity without self-aggregation nor promotion of DNA condensation. Is unable to protect DNA from DNase-mediated cleavage.</text>
</comment>
<comment type="catalytic activity">
    <reaction>
        <text>2 Fe(2+) + H2O2 + 2 H(+) = 2 Fe(3+) + 2 H2O</text>
        <dbReference type="Rhea" id="RHEA:48712"/>
        <dbReference type="ChEBI" id="CHEBI:15377"/>
        <dbReference type="ChEBI" id="CHEBI:15378"/>
        <dbReference type="ChEBI" id="CHEBI:16240"/>
        <dbReference type="ChEBI" id="CHEBI:29033"/>
        <dbReference type="ChEBI" id="CHEBI:29034"/>
    </reaction>
</comment>
<comment type="subunit">
    <text evidence="1 3 4 5">The 12 identical subunits form a hollow sphere into which the mineral iron core of up to 500 Fe(3+) can be deposited (By similarity). Homododecamer.</text>
</comment>
<comment type="subcellular location">
    <subcellularLocation>
        <location evidence="1">Cytoplasm</location>
        <location evidence="1">Nucleoid</location>
    </subcellularLocation>
</comment>
<comment type="domain">
    <text>12 di-nuclear ferroxidase centers are located at the interfaces between subunits related by 2-fold symmetry axes.</text>
</comment>
<comment type="similarity">
    <text evidence="6">Belongs to the Dps family.</text>
</comment>
<comment type="caution">
    <text evidence="6">The sequence shown here has been extracted from PDB entry 1UVH.</text>
</comment>
<feature type="chain" id="PRO_0000253333" description="DNA protection during starvation protein">
    <location>
        <begin position="1"/>
        <end position="183"/>
    </location>
</feature>
<feature type="region of interest" description="Disordered" evidence="2">
    <location>
        <begin position="162"/>
        <end position="183"/>
    </location>
</feature>
<feature type="binding site" evidence="4 5">
    <location>
        <position position="39"/>
    </location>
    <ligand>
        <name>Fe cation</name>
        <dbReference type="ChEBI" id="CHEBI:24875"/>
        <label>1</label>
        <note>ligand shared between two dodecameric partners</note>
    </ligand>
</feature>
<feature type="binding site" description="in other chain" evidence="4 5">
    <location>
        <position position="66"/>
    </location>
    <ligand>
        <name>Fe cation</name>
        <dbReference type="ChEBI" id="CHEBI:24875"/>
        <label>1</label>
        <note>ligand shared between two dodecameric partners</note>
    </ligand>
</feature>
<feature type="binding site" description="in other chain" evidence="4 5">
    <location>
        <position position="70"/>
    </location>
    <ligand>
        <name>Fe cation</name>
        <dbReference type="ChEBI" id="CHEBI:24875"/>
        <label>1</label>
        <note>ligand shared between two dodecameric partners</note>
    </ligand>
</feature>
<feature type="binding site" evidence="7 8">
    <location>
        <position position="70"/>
    </location>
    <ligand>
        <name>Fe cation</name>
        <dbReference type="ChEBI" id="CHEBI:24875"/>
        <label>2</label>
    </ligand>
</feature>
<feature type="helix" evidence="10">
    <location>
        <begin position="14"/>
        <end position="41"/>
    </location>
</feature>
<feature type="strand" evidence="10">
    <location>
        <begin position="42"/>
        <end position="44"/>
    </location>
</feature>
<feature type="helix" evidence="10">
    <location>
        <begin position="47"/>
        <end position="74"/>
    </location>
</feature>
<feature type="helix" evidence="10">
    <location>
        <begin position="83"/>
        <end position="89"/>
    </location>
</feature>
<feature type="strand" evidence="10">
    <location>
        <begin position="99"/>
        <end position="101"/>
    </location>
</feature>
<feature type="helix" evidence="10">
    <location>
        <begin position="102"/>
        <end position="127"/>
    </location>
</feature>
<feature type="turn" evidence="10">
    <location>
        <begin position="128"/>
        <end position="130"/>
    </location>
</feature>
<feature type="helix" evidence="10">
    <location>
        <begin position="132"/>
        <end position="156"/>
    </location>
</feature>
<feature type="strand" evidence="9">
    <location>
        <begin position="159"/>
        <end position="161"/>
    </location>
</feature>
<proteinExistence type="evidence at protein level"/>
<accession>P0C558</accession>
<accession>Q8VP75</accession>
<organism>
    <name type="scientific">Mycolicibacterium smegmatis</name>
    <name type="common">Mycobacterium smegmatis</name>
    <dbReference type="NCBI Taxonomy" id="1772"/>
    <lineage>
        <taxon>Bacteria</taxon>
        <taxon>Bacillati</taxon>
        <taxon>Actinomycetota</taxon>
        <taxon>Actinomycetes</taxon>
        <taxon>Mycobacteriales</taxon>
        <taxon>Mycobacteriaceae</taxon>
        <taxon>Mycolicibacterium</taxon>
    </lineage>
</organism>